<reference key="1">
    <citation type="journal article" date="2000" name="Proc. Natl. Acad. Sci. U.S.A.">
        <title>Genome sequence of Halobacterium species NRC-1.</title>
        <authorList>
            <person name="Ng W.V."/>
            <person name="Kennedy S.P."/>
            <person name="Mahairas G.G."/>
            <person name="Berquist B."/>
            <person name="Pan M."/>
            <person name="Shukla H.D."/>
            <person name="Lasky S.R."/>
            <person name="Baliga N.S."/>
            <person name="Thorsson V."/>
            <person name="Sbrogna J."/>
            <person name="Swartzell S."/>
            <person name="Weir D."/>
            <person name="Hall J."/>
            <person name="Dahl T.A."/>
            <person name="Welti R."/>
            <person name="Goo Y.A."/>
            <person name="Leithauser B."/>
            <person name="Keller K."/>
            <person name="Cruz R."/>
            <person name="Danson M.J."/>
            <person name="Hough D.W."/>
            <person name="Maddocks D.G."/>
            <person name="Jablonski P.E."/>
            <person name="Krebs M.P."/>
            <person name="Angevine C.M."/>
            <person name="Dale H."/>
            <person name="Isenbarger T.A."/>
            <person name="Peck R.F."/>
            <person name="Pohlschroder M."/>
            <person name="Spudich J.L."/>
            <person name="Jung K.-H."/>
            <person name="Alam M."/>
            <person name="Freitas T."/>
            <person name="Hou S."/>
            <person name="Daniels C.J."/>
            <person name="Dennis P.P."/>
            <person name="Omer A.D."/>
            <person name="Ebhardt H."/>
            <person name="Lowe T.M."/>
            <person name="Liang P."/>
            <person name="Riley M."/>
            <person name="Hood L."/>
            <person name="DasSarma S."/>
        </authorList>
    </citation>
    <scope>NUCLEOTIDE SEQUENCE [LARGE SCALE GENOMIC DNA]</scope>
    <source>
        <strain>ATCC 700922 / JCM 11081 / NRC-1</strain>
    </source>
</reference>
<name>SYFB_HALSA</name>
<protein>
    <recommendedName>
        <fullName evidence="1">Phenylalanine--tRNA ligase beta subunit</fullName>
        <ecNumber evidence="1">6.1.1.20</ecNumber>
    </recommendedName>
    <alternativeName>
        <fullName evidence="1">Phenylalanyl-tRNA synthetase beta subunit</fullName>
        <shortName evidence="1">PheRS</shortName>
    </alternativeName>
</protein>
<sequence length="567" mass="62365">MPVVDIDPDELRRLTGHRSKDDDELRQDLFGLGIEYEGETEDGDFKLEFEADRLDRLSVEGIARSLRYHAGDDRGVDIPDTNAPEWAIDVTDVPADRPYVTGAVIRGVDLDADALDSLIQLQEKLHATMGRKRAKGAIGIHDLAMLKGDTVDGDGTAARSLTYTGIDPDGDTFVPLDDDAERTPADVLTEHPTGETYADLLADHDTYPAIYDDIGLFSFPPVINGRRTEVTTDSRELFVELTGTDQWTIDRMCAIICYALDARGATIEDVTVDYPDRELHRPDFAVRTKHVSHDRIETLLGVEFTTEAVVDLAERAGLDATPTDDGYDVEIPPYRVDVRHPVDVVDDLGRAYDFNDLTPRYPDVNTIGGRTESSRLERSVRQALVGLGFEDLLNFNMTSEAENFDRMRLTPDHDAVGAAQPATIAEPYSQDFTILRTWALPSLAMVLETNTHHAYPQDLAEVGFAAHADGDTQTGVAERRTVAAVLARNDASYEDAKARLQALCDEFAVALETPPTTHPSFIDGRAATIEIDGQPAGVIGELHPGVIVEHDVEVPVAGFEFELDALR</sequence>
<comment type="catalytic activity">
    <reaction evidence="1">
        <text>tRNA(Phe) + L-phenylalanine + ATP = L-phenylalanyl-tRNA(Phe) + AMP + diphosphate + H(+)</text>
        <dbReference type="Rhea" id="RHEA:19413"/>
        <dbReference type="Rhea" id="RHEA-COMP:9668"/>
        <dbReference type="Rhea" id="RHEA-COMP:9699"/>
        <dbReference type="ChEBI" id="CHEBI:15378"/>
        <dbReference type="ChEBI" id="CHEBI:30616"/>
        <dbReference type="ChEBI" id="CHEBI:33019"/>
        <dbReference type="ChEBI" id="CHEBI:58095"/>
        <dbReference type="ChEBI" id="CHEBI:78442"/>
        <dbReference type="ChEBI" id="CHEBI:78531"/>
        <dbReference type="ChEBI" id="CHEBI:456215"/>
        <dbReference type="EC" id="6.1.1.20"/>
    </reaction>
</comment>
<comment type="cofactor">
    <cofactor evidence="1">
        <name>Mg(2+)</name>
        <dbReference type="ChEBI" id="CHEBI:18420"/>
    </cofactor>
</comment>
<comment type="subunit">
    <text evidence="1">Tetramer of two alpha and two beta subunits.</text>
</comment>
<comment type="subcellular location">
    <subcellularLocation>
        <location evidence="1">Cytoplasm</location>
    </subcellularLocation>
</comment>
<comment type="similarity">
    <text evidence="1 2">Belongs to the phenylalanyl-tRNA synthetase beta subunit family. Type 2 subfamily.</text>
</comment>
<dbReference type="EC" id="6.1.1.20" evidence="1"/>
<dbReference type="EMBL" id="AE004437">
    <property type="protein sequence ID" value="AAG20568.1"/>
    <property type="molecule type" value="Genomic_DNA"/>
</dbReference>
<dbReference type="PIR" id="D84400">
    <property type="entry name" value="D84400"/>
</dbReference>
<dbReference type="RefSeq" id="WP_010903870.1">
    <property type="nucleotide sequence ID" value="NC_002607.1"/>
</dbReference>
<dbReference type="SMR" id="Q9HMK3"/>
<dbReference type="FunCoup" id="Q9HMK3">
    <property type="interactions" value="203"/>
</dbReference>
<dbReference type="STRING" id="64091.VNG_2505G"/>
<dbReference type="PaxDb" id="64091-VNG_2505G"/>
<dbReference type="GeneID" id="89348501"/>
<dbReference type="KEGG" id="hal:VNG_2505G"/>
<dbReference type="PATRIC" id="fig|64091.14.peg.1940"/>
<dbReference type="HOGENOM" id="CLU_020279_3_0_2"/>
<dbReference type="InParanoid" id="Q9HMK3"/>
<dbReference type="OrthoDB" id="10073at2157"/>
<dbReference type="PhylomeDB" id="Q9HMK3"/>
<dbReference type="Proteomes" id="UP000000554">
    <property type="component" value="Chromosome"/>
</dbReference>
<dbReference type="GO" id="GO:0009328">
    <property type="term" value="C:phenylalanine-tRNA ligase complex"/>
    <property type="evidence" value="ECO:0000318"/>
    <property type="project" value="GO_Central"/>
</dbReference>
<dbReference type="GO" id="GO:0005524">
    <property type="term" value="F:ATP binding"/>
    <property type="evidence" value="ECO:0007669"/>
    <property type="project" value="UniProtKB-UniRule"/>
</dbReference>
<dbReference type="GO" id="GO:0000287">
    <property type="term" value="F:magnesium ion binding"/>
    <property type="evidence" value="ECO:0007669"/>
    <property type="project" value="InterPro"/>
</dbReference>
<dbReference type="GO" id="GO:0004826">
    <property type="term" value="F:phenylalanine-tRNA ligase activity"/>
    <property type="evidence" value="ECO:0007669"/>
    <property type="project" value="UniProtKB-UniRule"/>
</dbReference>
<dbReference type="GO" id="GO:0003723">
    <property type="term" value="F:RNA binding"/>
    <property type="evidence" value="ECO:0007669"/>
    <property type="project" value="InterPro"/>
</dbReference>
<dbReference type="GO" id="GO:0006432">
    <property type="term" value="P:phenylalanyl-tRNA aminoacylation"/>
    <property type="evidence" value="ECO:0000318"/>
    <property type="project" value="GO_Central"/>
</dbReference>
<dbReference type="CDD" id="cd00769">
    <property type="entry name" value="PheRS_beta_core"/>
    <property type="match status" value="1"/>
</dbReference>
<dbReference type="FunFam" id="3.30.56.10:FF:000011">
    <property type="entry name" value="Phenylalanine--tRNA ligase beta subunit"/>
    <property type="match status" value="1"/>
</dbReference>
<dbReference type="FunFam" id="3.50.40.10:FF:000003">
    <property type="entry name" value="Phenylalanine--tRNA ligase beta subunit"/>
    <property type="match status" value="1"/>
</dbReference>
<dbReference type="Gene3D" id="3.30.56.10">
    <property type="match status" value="2"/>
</dbReference>
<dbReference type="Gene3D" id="3.30.930.10">
    <property type="entry name" value="Bira Bifunctional Protein, Domain 2"/>
    <property type="match status" value="1"/>
</dbReference>
<dbReference type="Gene3D" id="3.50.40.10">
    <property type="entry name" value="Phenylalanyl-trna Synthetase, Chain B, domain 3"/>
    <property type="match status" value="1"/>
</dbReference>
<dbReference type="HAMAP" id="MF_00284">
    <property type="entry name" value="Phe_tRNA_synth_beta2"/>
    <property type="match status" value="1"/>
</dbReference>
<dbReference type="InterPro" id="IPR045864">
    <property type="entry name" value="aa-tRNA-synth_II/BPL/LPL"/>
</dbReference>
<dbReference type="InterPro" id="IPR005146">
    <property type="entry name" value="B3/B4_tRNA-bd"/>
</dbReference>
<dbReference type="InterPro" id="IPR009061">
    <property type="entry name" value="DNA-bd_dom_put_sf"/>
</dbReference>
<dbReference type="InterPro" id="IPR045060">
    <property type="entry name" value="Phe-tRNA-ligase_IIc_bsu"/>
</dbReference>
<dbReference type="InterPro" id="IPR004531">
    <property type="entry name" value="Phe-tRNA-synth_IIc_bsu_arc_euk"/>
</dbReference>
<dbReference type="InterPro" id="IPR020825">
    <property type="entry name" value="Phe-tRNA_synthase-like_B3/B4"/>
</dbReference>
<dbReference type="InterPro" id="IPR022918">
    <property type="entry name" value="Phe_tRNA_ligase_beta2_arc"/>
</dbReference>
<dbReference type="InterPro" id="IPR041616">
    <property type="entry name" value="PheRS_beta_core"/>
</dbReference>
<dbReference type="InterPro" id="IPR005147">
    <property type="entry name" value="tRNA_synthase_B5-dom"/>
</dbReference>
<dbReference type="NCBIfam" id="TIGR00471">
    <property type="entry name" value="pheT_arch"/>
    <property type="match status" value="1"/>
</dbReference>
<dbReference type="PANTHER" id="PTHR10947:SF0">
    <property type="entry name" value="PHENYLALANINE--TRNA LIGASE BETA SUBUNIT"/>
    <property type="match status" value="1"/>
</dbReference>
<dbReference type="PANTHER" id="PTHR10947">
    <property type="entry name" value="PHENYLALANYL-TRNA SYNTHETASE BETA CHAIN AND LEUCINE-RICH REPEAT-CONTAINING PROTEIN 47"/>
    <property type="match status" value="1"/>
</dbReference>
<dbReference type="Pfam" id="PF03484">
    <property type="entry name" value="B5"/>
    <property type="match status" value="1"/>
</dbReference>
<dbReference type="Pfam" id="PF17759">
    <property type="entry name" value="tRNA_synthFbeta"/>
    <property type="match status" value="1"/>
</dbReference>
<dbReference type="SMART" id="SM00873">
    <property type="entry name" value="B3_4"/>
    <property type="match status" value="1"/>
</dbReference>
<dbReference type="SMART" id="SM00874">
    <property type="entry name" value="B5"/>
    <property type="match status" value="1"/>
</dbReference>
<dbReference type="SUPFAM" id="SSF55681">
    <property type="entry name" value="Class II aaRS and biotin synthetases"/>
    <property type="match status" value="1"/>
</dbReference>
<dbReference type="SUPFAM" id="SSF46955">
    <property type="entry name" value="Putative DNA-binding domain"/>
    <property type="match status" value="2"/>
</dbReference>
<dbReference type="PROSITE" id="PS51483">
    <property type="entry name" value="B5"/>
    <property type="match status" value="1"/>
</dbReference>
<feature type="chain" id="PRO_0000127000" description="Phenylalanine--tRNA ligase beta subunit">
    <location>
        <begin position="1"/>
        <end position="567"/>
    </location>
</feature>
<feature type="domain" description="B5" evidence="1">
    <location>
        <begin position="284"/>
        <end position="359"/>
    </location>
</feature>
<feature type="binding site" evidence="1">
    <location>
        <position position="337"/>
    </location>
    <ligand>
        <name>Mg(2+)</name>
        <dbReference type="ChEBI" id="CHEBI:18420"/>
        <note>shared with alpha subunit</note>
    </ligand>
</feature>
<feature type="binding site" evidence="1">
    <location>
        <position position="343"/>
    </location>
    <ligand>
        <name>Mg(2+)</name>
        <dbReference type="ChEBI" id="CHEBI:18420"/>
        <note>shared with alpha subunit</note>
    </ligand>
</feature>
<feature type="binding site" evidence="1">
    <location>
        <position position="346"/>
    </location>
    <ligand>
        <name>Mg(2+)</name>
        <dbReference type="ChEBI" id="CHEBI:18420"/>
        <note>shared with alpha subunit</note>
    </ligand>
</feature>
<feature type="binding site" evidence="1">
    <location>
        <position position="347"/>
    </location>
    <ligand>
        <name>Mg(2+)</name>
        <dbReference type="ChEBI" id="CHEBI:18420"/>
        <note>shared with alpha subunit</note>
    </ligand>
</feature>
<gene>
    <name evidence="1" type="primary">pheT</name>
    <name type="synonym">pheY</name>
    <name type="ordered locus">VNG_2505G</name>
</gene>
<organism>
    <name type="scientific">Halobacterium salinarum (strain ATCC 700922 / JCM 11081 / NRC-1)</name>
    <name type="common">Halobacterium halobium</name>
    <dbReference type="NCBI Taxonomy" id="64091"/>
    <lineage>
        <taxon>Archaea</taxon>
        <taxon>Methanobacteriati</taxon>
        <taxon>Methanobacteriota</taxon>
        <taxon>Stenosarchaea group</taxon>
        <taxon>Halobacteria</taxon>
        <taxon>Halobacteriales</taxon>
        <taxon>Halobacteriaceae</taxon>
        <taxon>Halobacterium</taxon>
        <taxon>Halobacterium salinarum NRC-34001</taxon>
    </lineage>
</organism>
<evidence type="ECO:0000255" key="1">
    <source>
        <dbReference type="HAMAP-Rule" id="MF_00284"/>
    </source>
</evidence>
<evidence type="ECO:0000305" key="2"/>
<accession>Q9HMK3</accession>
<proteinExistence type="inferred from homology"/>
<keyword id="KW-0030">Aminoacyl-tRNA synthetase</keyword>
<keyword id="KW-0067">ATP-binding</keyword>
<keyword id="KW-0963">Cytoplasm</keyword>
<keyword id="KW-0436">Ligase</keyword>
<keyword id="KW-0460">Magnesium</keyword>
<keyword id="KW-0479">Metal-binding</keyword>
<keyword id="KW-0547">Nucleotide-binding</keyword>
<keyword id="KW-0648">Protein biosynthesis</keyword>
<keyword id="KW-1185">Reference proteome</keyword>